<keyword id="KW-0256">Endoplasmic reticulum</keyword>
<keyword id="KW-0325">Glycoprotein</keyword>
<keyword id="KW-0328">Glycosyltransferase</keyword>
<keyword id="KW-0472">Membrane</keyword>
<keyword id="KW-1185">Reference proteome</keyword>
<keyword id="KW-0808">Transferase</keyword>
<keyword id="KW-0812">Transmembrane</keyword>
<keyword id="KW-1133">Transmembrane helix</keyword>
<proteinExistence type="evidence at protein level"/>
<feature type="chain" id="PRO_0000215791" description="Alpha-1,2-mannosyltransferase algn-9">
    <location>
        <begin position="1"/>
        <end position="603"/>
    </location>
</feature>
<feature type="topological domain" description="Lumenal" evidence="5">
    <location>
        <begin position="1"/>
        <end position="108"/>
    </location>
</feature>
<feature type="transmembrane region" description="Helical" evidence="2">
    <location>
        <begin position="109"/>
        <end position="129"/>
    </location>
</feature>
<feature type="topological domain" description="Cytoplasmic" evidence="5">
    <location>
        <position position="130"/>
    </location>
</feature>
<feature type="transmembrane region" description="Helical" evidence="2">
    <location>
        <begin position="131"/>
        <end position="151"/>
    </location>
</feature>
<feature type="topological domain" description="Lumenal" evidence="5">
    <location>
        <begin position="152"/>
        <end position="166"/>
    </location>
</feature>
<feature type="transmembrane region" description="Helical" evidence="2">
    <location>
        <begin position="167"/>
        <end position="187"/>
    </location>
</feature>
<feature type="topological domain" description="Cytoplasmic" evidence="5">
    <location>
        <begin position="188"/>
        <end position="195"/>
    </location>
</feature>
<feature type="transmembrane region" description="Helical" evidence="2">
    <location>
        <begin position="196"/>
        <end position="216"/>
    </location>
</feature>
<feature type="topological domain" description="Lumenal" evidence="5">
    <location>
        <begin position="217"/>
        <end position="218"/>
    </location>
</feature>
<feature type="transmembrane region" description="Helical" evidence="2">
    <location>
        <begin position="219"/>
        <end position="239"/>
    </location>
</feature>
<feature type="topological domain" description="Cytoplasmic" evidence="5">
    <location>
        <begin position="240"/>
        <end position="245"/>
    </location>
</feature>
<feature type="transmembrane region" description="Helical" evidence="2">
    <location>
        <begin position="246"/>
        <end position="266"/>
    </location>
</feature>
<feature type="topological domain" description="Lumenal" evidence="5">
    <location>
        <begin position="267"/>
        <end position="310"/>
    </location>
</feature>
<feature type="transmembrane region" description="Helical" evidence="2">
    <location>
        <begin position="311"/>
        <end position="331"/>
    </location>
</feature>
<feature type="topological domain" description="Cytoplasmic" evidence="5">
    <location>
        <begin position="332"/>
        <end position="343"/>
    </location>
</feature>
<feature type="transmembrane region" description="Helical" evidence="2">
    <location>
        <begin position="344"/>
        <end position="364"/>
    </location>
</feature>
<feature type="topological domain" description="Lumenal" evidence="5">
    <location>
        <begin position="365"/>
        <end position="370"/>
    </location>
</feature>
<feature type="transmembrane region" description="Helical" evidence="2">
    <location>
        <begin position="371"/>
        <end position="391"/>
    </location>
</feature>
<feature type="topological domain" description="Cytoplasmic" evidence="5">
    <location>
        <begin position="392"/>
        <end position="397"/>
    </location>
</feature>
<feature type="transmembrane region" description="Helical" evidence="2">
    <location>
        <begin position="398"/>
        <end position="418"/>
    </location>
</feature>
<feature type="topological domain" description="Lumenal" evidence="5">
    <location>
        <begin position="419"/>
        <end position="603"/>
    </location>
</feature>
<feature type="region of interest" description="Disordered" evidence="3">
    <location>
        <begin position="1"/>
        <end position="25"/>
    </location>
</feature>
<feature type="glycosylation site" description="N-linked (GlcNAc...) asparagine" evidence="4">
    <location>
        <position position="443"/>
    </location>
</feature>
<accession>P54002</accession>
<sequence length="603" mass="68912">MVTHRRKGGSGPPQKPPPRIVDRSSFDADKKKIKVEKLYHKANNPDNDWPFSFGSVFKMLLSIRISGAIWGIINDCDEVYNYWEPLHLFLYGEGFQTWEYSPVYAIRSYFYIYLHYIPASLFANLFGDTKIVVFTLIRLTIGLFCLLGEYYAFDAICKKINIATGRFFILFSIFSSGMFLASTAFVPSSFCMAITFYILGAYLNENWTAGIFCVAFSTMVGWPFSAVLGLPIVADMLLLKGLRIRFILTSLVIGLCIGGVQVITDSHYFGKTVLAPLNIFLYNVVSGPGPSLYGEEPLSFYIKNLFNNWNIVIFAAPFGFPLSLAYFTKVWMSQDRNVALYQRFAPIILLAVTTAAWLLIFGSQAHKEERFLFPIYPFIAFFAALALDATNRLCLKKLGMDNILSILFILCFAILSASRTYSIHNNYGSHVEIYRSLNAELTNRTNFKNFHDPIRVCVGKEWHRFPSSFFIPQTVSDGKKVEMRFIQSEFRGLLPKPFLKSDKLVEVTRHIPTEMNNLNQEEISRYVDLDSCDYVVDVDMPQSDREPDFRKMEDNWKPVDSLPFIDVSKSTGFHGLLRAFYVPFLSAKHNVMTTCTLYRKSNL</sequence>
<name>ALG9_CAEEL</name>
<dbReference type="EC" id="2.4.1.259" evidence="1"/>
<dbReference type="EC" id="2.4.1.261" evidence="1"/>
<dbReference type="EMBL" id="BX284602">
    <property type="protein sequence ID" value="CAA90107.2"/>
    <property type="molecule type" value="Genomic_DNA"/>
</dbReference>
<dbReference type="PIR" id="T19245">
    <property type="entry name" value="T19245"/>
</dbReference>
<dbReference type="RefSeq" id="NP_496282.2">
    <property type="nucleotide sequence ID" value="NM_063881.4"/>
</dbReference>
<dbReference type="BioGRID" id="39947">
    <property type="interactions" value="1"/>
</dbReference>
<dbReference type="FunCoup" id="P54002">
    <property type="interactions" value="3131"/>
</dbReference>
<dbReference type="STRING" id="6239.C14A4.3.1"/>
<dbReference type="CAZy" id="GT22">
    <property type="family name" value="Glycosyltransferase Family 22"/>
</dbReference>
<dbReference type="GlyCosmos" id="P54002">
    <property type="glycosylation" value="1 site, No reported glycans"/>
</dbReference>
<dbReference type="iPTMnet" id="P54002"/>
<dbReference type="PaxDb" id="6239-C14A4.3"/>
<dbReference type="PeptideAtlas" id="P54002"/>
<dbReference type="EnsemblMetazoa" id="C14A4.3.1">
    <property type="protein sequence ID" value="C14A4.3.1"/>
    <property type="gene ID" value="WBGene00007556"/>
</dbReference>
<dbReference type="GeneID" id="174633"/>
<dbReference type="KEGG" id="cel:CELE_C14A4.3"/>
<dbReference type="UCSC" id="C14A4.3">
    <property type="organism name" value="c. elegans"/>
</dbReference>
<dbReference type="AGR" id="WB:WBGene00007556"/>
<dbReference type="CTD" id="174633"/>
<dbReference type="WormBase" id="C14A4.3">
    <property type="protein sequence ID" value="CE32796"/>
    <property type="gene ID" value="WBGene00007556"/>
    <property type="gene designation" value="algn-9"/>
</dbReference>
<dbReference type="eggNOG" id="KOG2515">
    <property type="taxonomic scope" value="Eukaryota"/>
</dbReference>
<dbReference type="GeneTree" id="ENSGT00950000183090"/>
<dbReference type="HOGENOM" id="CLU_018152_1_1_1"/>
<dbReference type="InParanoid" id="P54002"/>
<dbReference type="OMA" id="PRDMHAK"/>
<dbReference type="OrthoDB" id="497541at2759"/>
<dbReference type="PhylomeDB" id="P54002"/>
<dbReference type="Reactome" id="R-CEL-446193">
    <property type="pathway name" value="Biosynthesis of the N-glycan precursor (dolichol lipid-linked oligosaccharide, LLO) and transfer to a nascent protein"/>
</dbReference>
<dbReference type="UniPathway" id="UPA00378"/>
<dbReference type="PRO" id="PR:P54002"/>
<dbReference type="Proteomes" id="UP000001940">
    <property type="component" value="Chromosome II"/>
</dbReference>
<dbReference type="Bgee" id="WBGene00007556">
    <property type="expression patterns" value="Expressed in pharyngeal muscle cell (C elegans) and 4 other cell types or tissues"/>
</dbReference>
<dbReference type="GO" id="GO:0005789">
    <property type="term" value="C:endoplasmic reticulum membrane"/>
    <property type="evidence" value="ECO:0000318"/>
    <property type="project" value="GO_Central"/>
</dbReference>
<dbReference type="GO" id="GO:0000026">
    <property type="term" value="F:alpha-1,2-mannosyltransferase activity"/>
    <property type="evidence" value="ECO:0000318"/>
    <property type="project" value="GO_Central"/>
</dbReference>
<dbReference type="GO" id="GO:0052926">
    <property type="term" value="F:dol-P-Man:Man(6)GlcNAc(2)-PP-Dol alpha-1,2-mannosyltransferase activity"/>
    <property type="evidence" value="ECO:0007669"/>
    <property type="project" value="UniProtKB-EC"/>
</dbReference>
<dbReference type="GO" id="GO:0052918">
    <property type="term" value="F:dol-P-Man:Man(8)GlcNAc(2)-PP-Dol alpha-1,2-mannosyltransferase activity"/>
    <property type="evidence" value="ECO:0007669"/>
    <property type="project" value="UniProtKB-EC"/>
</dbReference>
<dbReference type="GO" id="GO:0006487">
    <property type="term" value="P:protein N-linked glycosylation"/>
    <property type="evidence" value="ECO:0000318"/>
    <property type="project" value="GO_Central"/>
</dbReference>
<dbReference type="InterPro" id="IPR005599">
    <property type="entry name" value="GPI_mannosylTrfase"/>
</dbReference>
<dbReference type="PANTHER" id="PTHR22760:SF2">
    <property type="entry name" value="ALPHA-1,2-MANNOSYLTRANSFERASE ALG9"/>
    <property type="match status" value="1"/>
</dbReference>
<dbReference type="PANTHER" id="PTHR22760">
    <property type="entry name" value="GLYCOSYLTRANSFERASE"/>
    <property type="match status" value="1"/>
</dbReference>
<dbReference type="Pfam" id="PF03901">
    <property type="entry name" value="Glyco_transf_22"/>
    <property type="match status" value="1"/>
</dbReference>
<reference key="1">
    <citation type="journal article" date="1998" name="Science">
        <title>Genome sequence of the nematode C. elegans: a platform for investigating biology.</title>
        <authorList>
            <consortium name="The C. elegans sequencing consortium"/>
        </authorList>
    </citation>
    <scope>NUCLEOTIDE SEQUENCE [LARGE SCALE GENOMIC DNA]</scope>
    <source>
        <strain>Bristol N2</strain>
    </source>
</reference>
<reference key="2">
    <citation type="journal article" date="2007" name="Mol. Cell. Proteomics">
        <title>Proteomics reveals N-linked glycoprotein diversity in Caenorhabditis elegans and suggests an atypical translocation mechanism for integral membrane proteins.</title>
        <authorList>
            <person name="Kaji H."/>
            <person name="Kamiie J."/>
            <person name="Kawakami H."/>
            <person name="Kido K."/>
            <person name="Yamauchi Y."/>
            <person name="Shinkawa T."/>
            <person name="Taoka M."/>
            <person name="Takahashi N."/>
            <person name="Isobe T."/>
        </authorList>
    </citation>
    <scope>GLYCOSYLATION [LARGE SCALE ANALYSIS] AT ASN-443</scope>
    <scope>IDENTIFICATION BY MASS SPECTROMETRY</scope>
    <source>
        <strain>Bristol N2</strain>
    </source>
</reference>
<protein>
    <recommendedName>
        <fullName evidence="1">Alpha-1,2-mannosyltransferase algn-9</fullName>
        <ecNumber evidence="1">2.4.1.259</ecNumber>
        <ecNumber evidence="1">2.4.1.261</ecNumber>
    </recommendedName>
    <alternativeName>
        <fullName evidence="6">Asparagine-linked glycosylation protein 9 homolog</fullName>
    </alternativeName>
    <alternativeName>
        <fullName evidence="1">Dol-P-Man:Man(6)GlcNAc(2)-PP-Dol alpha-1,2-mannosyltransferase</fullName>
    </alternativeName>
    <alternativeName>
        <fullName evidence="1">Dol-P-Man:Man(8)GlcNAc(2)-PP-Dol alpha-1,2-mannosyltransferase</fullName>
    </alternativeName>
</protein>
<evidence type="ECO:0000250" key="1">
    <source>
        <dbReference type="UniProtKB" id="Q9H6U8"/>
    </source>
</evidence>
<evidence type="ECO:0000255" key="2"/>
<evidence type="ECO:0000256" key="3">
    <source>
        <dbReference type="SAM" id="MobiDB-lite"/>
    </source>
</evidence>
<evidence type="ECO:0000269" key="4">
    <source>
    </source>
</evidence>
<evidence type="ECO:0000305" key="5"/>
<evidence type="ECO:0000312" key="6">
    <source>
        <dbReference type="WormBase" id="C14A4.3"/>
    </source>
</evidence>
<gene>
    <name evidence="6" type="primary">algn-9</name>
    <name evidence="6" type="ORF">C14A4.3</name>
</gene>
<comment type="function">
    <text evidence="1">Catalyzes the transfer of mannose from Dol-P-Man to lipid-linked oligosaccharides.</text>
</comment>
<comment type="catalytic activity">
    <reaction evidence="1">
        <text>an alpha-D-Man-(1-&gt;2)-alpha-D-Man-(1-&gt;2)-alpha-D-Man-(1-&gt;3)-[alpha-D-Man-(1-&gt;3)-alpha-D-Man-(1-&gt;6)]-beta-D-Man-(1-&gt;4)-beta-D-GlcNAc-(1-&gt;4)-alpha-D-GlcNAc-diphospho-di-trans,poly-cis-dolichol + a di-trans,poly-cis-dolichyl beta-D-mannosyl phosphate = an alpha-D-Man-(1-&gt;2)-alpha-D-Man-(1-&gt;2)-alpha-D-Man-(1-&gt;3)-[alpha-D-Man-(1-&gt;2)-alpha-D-Man-(1-&gt;3)-alpha-D-Man-(1-&gt;6)]-beta-D-Man-(1-&gt;4)-beta-D-GlcNAc-(1-&gt;4)-alpha-D-GlcNAc-diphospho-di-trans,poly-cis-dolichol + a di-trans,poly-cis-dolichyl phosphate + H(+)</text>
        <dbReference type="Rhea" id="RHEA:29531"/>
        <dbReference type="Rhea" id="RHEA-COMP:19498"/>
        <dbReference type="Rhea" id="RHEA-COMP:19501"/>
        <dbReference type="Rhea" id="RHEA-COMP:19517"/>
        <dbReference type="Rhea" id="RHEA-COMP:19518"/>
        <dbReference type="ChEBI" id="CHEBI:15378"/>
        <dbReference type="ChEBI" id="CHEBI:57683"/>
        <dbReference type="ChEBI" id="CHEBI:58211"/>
        <dbReference type="ChEBI" id="CHEBI:132516"/>
        <dbReference type="ChEBI" id="CHEBI:132517"/>
        <dbReference type="EC" id="2.4.1.259"/>
    </reaction>
</comment>
<comment type="catalytic activity">
    <reaction evidence="1">
        <text>an alpha-D-Man-(1-&gt;2)-alpha-D-Man-(1-&gt;2)-alpha-D-Man-(1-&gt;3)-[alpha-D-Man-(1-&gt;2)-alpha-D-Man-(1-&gt;3)-[alpha-D-Man-(1-&gt;6)]-alpha-D-Man-(1-&gt;6)]-beta-D-Man-(1-&gt;4)-beta-D-GlcNAc-(1-&gt;4)-alpha-D-GlcNAc-diphospho-di-trans,poly-cis-dolichol + a di-trans,poly-cis-dolichyl beta-D-mannosyl phosphate = an alpha-D-Man-(1-&gt;2)-alpha-D-Man-(1-&gt;2)-alpha-D-Man-(1-&gt;3)-[alpha-D-Man-(1-&gt;2)-alpha-D-Man-(1-&gt;3)-[alpha-D-Man-(1-&gt;2)-alpha-D-Man-(1-&gt;6)]-alpha-D-Man-(1-&gt;6)]-beta-D-Man-(1-&gt;4)-beta-D-GlcNAc-(1-&gt;4)-alpha-D-GlcNAc-diphospho-di-trans,poly-cis-dolichol + a di-trans,poly-cis-dolichyl phosphate + H(+)</text>
        <dbReference type="Rhea" id="RHEA:29539"/>
        <dbReference type="Rhea" id="RHEA-COMP:19498"/>
        <dbReference type="Rhea" id="RHEA-COMP:19501"/>
        <dbReference type="Rhea" id="RHEA-COMP:19519"/>
        <dbReference type="Rhea" id="RHEA-COMP:19520"/>
        <dbReference type="ChEBI" id="CHEBI:15378"/>
        <dbReference type="ChEBI" id="CHEBI:57683"/>
        <dbReference type="ChEBI" id="CHEBI:58211"/>
        <dbReference type="ChEBI" id="CHEBI:132519"/>
        <dbReference type="ChEBI" id="CHEBI:132520"/>
        <dbReference type="EC" id="2.4.1.261"/>
    </reaction>
</comment>
<comment type="pathway">
    <text evidence="1">Protein modification; protein glycosylation.</text>
</comment>
<comment type="subcellular location">
    <subcellularLocation>
        <location evidence="1">Endoplasmic reticulum membrane</location>
        <topology evidence="5">Multi-pass membrane protein</topology>
    </subcellularLocation>
</comment>
<comment type="similarity">
    <text evidence="5">Belongs to the glycosyltransferase 22 family.</text>
</comment>
<organism>
    <name type="scientific">Caenorhabditis elegans</name>
    <dbReference type="NCBI Taxonomy" id="6239"/>
    <lineage>
        <taxon>Eukaryota</taxon>
        <taxon>Metazoa</taxon>
        <taxon>Ecdysozoa</taxon>
        <taxon>Nematoda</taxon>
        <taxon>Chromadorea</taxon>
        <taxon>Rhabditida</taxon>
        <taxon>Rhabditina</taxon>
        <taxon>Rhabditomorpha</taxon>
        <taxon>Rhabditoidea</taxon>
        <taxon>Rhabditidae</taxon>
        <taxon>Peloderinae</taxon>
        <taxon>Caenorhabditis</taxon>
    </lineage>
</organism>